<organism>
    <name type="scientific">Aliivibrio fischeri (strain MJ11)</name>
    <name type="common">Vibrio fischeri</name>
    <dbReference type="NCBI Taxonomy" id="388396"/>
    <lineage>
        <taxon>Bacteria</taxon>
        <taxon>Pseudomonadati</taxon>
        <taxon>Pseudomonadota</taxon>
        <taxon>Gammaproteobacteria</taxon>
        <taxon>Vibrionales</taxon>
        <taxon>Vibrionaceae</taxon>
        <taxon>Aliivibrio</taxon>
    </lineage>
</organism>
<reference key="1">
    <citation type="submission" date="2008-08" db="EMBL/GenBank/DDBJ databases">
        <title>Complete sequence of Vibrio fischeri strain MJ11.</title>
        <authorList>
            <person name="Mandel M.J."/>
            <person name="Stabb E.V."/>
            <person name="Ruby E.G."/>
            <person name="Ferriera S."/>
            <person name="Johnson J."/>
            <person name="Kravitz S."/>
            <person name="Beeson K."/>
            <person name="Sutton G."/>
            <person name="Rogers Y.-H."/>
            <person name="Friedman R."/>
            <person name="Frazier M."/>
            <person name="Venter J.C."/>
        </authorList>
    </citation>
    <scope>NUCLEOTIDE SEQUENCE [LARGE SCALE GENOMIC DNA]</scope>
    <source>
        <strain>MJ11</strain>
    </source>
</reference>
<comment type="function">
    <text evidence="1">Binds directly to 23S ribosomal RNA and is necessary for the in vitro assembly process of the 50S ribosomal subunit. It is not involved in the protein synthesizing functions of that subunit.</text>
</comment>
<comment type="similarity">
    <text evidence="1">Belongs to the bacterial ribosomal protein bL20 family.</text>
</comment>
<dbReference type="EMBL" id="CP001139">
    <property type="protein sequence ID" value="ACH65317.1"/>
    <property type="molecule type" value="Genomic_DNA"/>
</dbReference>
<dbReference type="RefSeq" id="WP_005419081.1">
    <property type="nucleotide sequence ID" value="NC_011184.1"/>
</dbReference>
<dbReference type="SMR" id="B5FDV4"/>
<dbReference type="GeneID" id="54163889"/>
<dbReference type="KEGG" id="vfm:VFMJ11_1298"/>
<dbReference type="HOGENOM" id="CLU_123265_0_1_6"/>
<dbReference type="Proteomes" id="UP000001857">
    <property type="component" value="Chromosome I"/>
</dbReference>
<dbReference type="GO" id="GO:1990904">
    <property type="term" value="C:ribonucleoprotein complex"/>
    <property type="evidence" value="ECO:0007669"/>
    <property type="project" value="UniProtKB-KW"/>
</dbReference>
<dbReference type="GO" id="GO:0005840">
    <property type="term" value="C:ribosome"/>
    <property type="evidence" value="ECO:0007669"/>
    <property type="project" value="UniProtKB-KW"/>
</dbReference>
<dbReference type="GO" id="GO:0019843">
    <property type="term" value="F:rRNA binding"/>
    <property type="evidence" value="ECO:0007669"/>
    <property type="project" value="UniProtKB-UniRule"/>
</dbReference>
<dbReference type="GO" id="GO:0003735">
    <property type="term" value="F:structural constituent of ribosome"/>
    <property type="evidence" value="ECO:0007669"/>
    <property type="project" value="InterPro"/>
</dbReference>
<dbReference type="GO" id="GO:0000027">
    <property type="term" value="P:ribosomal large subunit assembly"/>
    <property type="evidence" value="ECO:0007669"/>
    <property type="project" value="UniProtKB-UniRule"/>
</dbReference>
<dbReference type="GO" id="GO:0006412">
    <property type="term" value="P:translation"/>
    <property type="evidence" value="ECO:0007669"/>
    <property type="project" value="InterPro"/>
</dbReference>
<dbReference type="CDD" id="cd07026">
    <property type="entry name" value="Ribosomal_L20"/>
    <property type="match status" value="1"/>
</dbReference>
<dbReference type="FunFam" id="1.10.1900.20:FF:000001">
    <property type="entry name" value="50S ribosomal protein L20"/>
    <property type="match status" value="1"/>
</dbReference>
<dbReference type="Gene3D" id="6.10.160.10">
    <property type="match status" value="1"/>
</dbReference>
<dbReference type="Gene3D" id="1.10.1900.20">
    <property type="entry name" value="Ribosomal protein L20"/>
    <property type="match status" value="1"/>
</dbReference>
<dbReference type="HAMAP" id="MF_00382">
    <property type="entry name" value="Ribosomal_bL20"/>
    <property type="match status" value="1"/>
</dbReference>
<dbReference type="InterPro" id="IPR005813">
    <property type="entry name" value="Ribosomal_bL20"/>
</dbReference>
<dbReference type="InterPro" id="IPR049946">
    <property type="entry name" value="RIBOSOMAL_L20_CS"/>
</dbReference>
<dbReference type="InterPro" id="IPR035566">
    <property type="entry name" value="Ribosomal_protein_bL20_C"/>
</dbReference>
<dbReference type="NCBIfam" id="TIGR01032">
    <property type="entry name" value="rplT_bact"/>
    <property type="match status" value="1"/>
</dbReference>
<dbReference type="PANTHER" id="PTHR10986">
    <property type="entry name" value="39S RIBOSOMAL PROTEIN L20"/>
    <property type="match status" value="1"/>
</dbReference>
<dbReference type="Pfam" id="PF00453">
    <property type="entry name" value="Ribosomal_L20"/>
    <property type="match status" value="1"/>
</dbReference>
<dbReference type="PRINTS" id="PR00062">
    <property type="entry name" value="RIBOSOMALL20"/>
</dbReference>
<dbReference type="SUPFAM" id="SSF74731">
    <property type="entry name" value="Ribosomal protein L20"/>
    <property type="match status" value="1"/>
</dbReference>
<dbReference type="PROSITE" id="PS00937">
    <property type="entry name" value="RIBOSOMAL_L20"/>
    <property type="match status" value="1"/>
</dbReference>
<evidence type="ECO:0000255" key="1">
    <source>
        <dbReference type="HAMAP-Rule" id="MF_00382"/>
    </source>
</evidence>
<evidence type="ECO:0000305" key="2"/>
<accession>B5FDV4</accession>
<gene>
    <name evidence="1" type="primary">rplT</name>
    <name type="ordered locus">VFMJ11_1298</name>
</gene>
<name>RL20_ALIFM</name>
<proteinExistence type="inferred from homology"/>
<keyword id="KW-0687">Ribonucleoprotein</keyword>
<keyword id="KW-0689">Ribosomal protein</keyword>
<keyword id="KW-0694">RNA-binding</keyword>
<keyword id="KW-0699">rRNA-binding</keyword>
<sequence length="117" mass="13472">MPRVKRGVQARARHKKVLKQAKGYYGARSRVYRVAFQAVTKAGQYAYRDRRNKKRVFRQLWIARINAAARQNEMSYSRFINGLKKASIEIDRKILADIAVFDKVAFAALVEKAKAAL</sequence>
<protein>
    <recommendedName>
        <fullName evidence="1">Large ribosomal subunit protein bL20</fullName>
    </recommendedName>
    <alternativeName>
        <fullName evidence="2">50S ribosomal protein L20</fullName>
    </alternativeName>
</protein>
<feature type="chain" id="PRO_1000122390" description="Large ribosomal subunit protein bL20">
    <location>
        <begin position="1"/>
        <end position="117"/>
    </location>
</feature>